<name>DEF_SYMTH</name>
<reference key="1">
    <citation type="journal article" date="2004" name="Nucleic Acids Res.">
        <title>Genome sequence of Symbiobacterium thermophilum, an uncultivable bacterium that depends on microbial commensalism.</title>
        <authorList>
            <person name="Ueda K."/>
            <person name="Yamashita A."/>
            <person name="Ishikawa J."/>
            <person name="Shimada M."/>
            <person name="Watsuji T."/>
            <person name="Morimura K."/>
            <person name="Ikeda H."/>
            <person name="Hattori M."/>
            <person name="Beppu T."/>
        </authorList>
    </citation>
    <scope>NUCLEOTIDE SEQUENCE [LARGE SCALE GENOMIC DNA]</scope>
    <source>
        <strain>DSM 24528 / JCM 14929 / IAM 14863 / T</strain>
    </source>
</reference>
<organism>
    <name type="scientific">Symbiobacterium thermophilum (strain DSM 24528 / JCM 14929 / IAM 14863 / T)</name>
    <dbReference type="NCBI Taxonomy" id="292459"/>
    <lineage>
        <taxon>Bacteria</taxon>
        <taxon>Bacillati</taxon>
        <taxon>Bacillota</taxon>
        <taxon>Clostridia</taxon>
        <taxon>Eubacteriales</taxon>
        <taxon>Symbiobacteriaceae</taxon>
        <taxon>Symbiobacterium</taxon>
    </lineage>
</organism>
<sequence length="217" mass="23242">MAILEIVKEPAEVLRKKAKPVTKINASIRKLLDDMTETMYAAPGVGLAAPQVGVSKRLIVVDPQDGSGQLYQLINPEIVKAEGWVKGTEGCLSIPGMVGDVWRYEKVQVVALDRTGKKVWIDAEGYLARIFQHEIDHLDGILYTDKCTNLRPVSEDGEEEEEAEVAEVMPEPEAEGAGEPSAEGAGQAAAEAGAEEGEQVTTGVSGERRGSAAAKEE</sequence>
<proteinExistence type="inferred from homology"/>
<feature type="chain" id="PRO_0000301114" description="Peptide deformylase">
    <location>
        <begin position="1"/>
        <end position="217"/>
    </location>
</feature>
<feature type="region of interest" description="Disordered" evidence="2">
    <location>
        <begin position="153"/>
        <end position="217"/>
    </location>
</feature>
<feature type="compositionally biased region" description="Acidic residues" evidence="2">
    <location>
        <begin position="155"/>
        <end position="176"/>
    </location>
</feature>
<feature type="compositionally biased region" description="Low complexity" evidence="2">
    <location>
        <begin position="177"/>
        <end position="192"/>
    </location>
</feature>
<feature type="compositionally biased region" description="Basic and acidic residues" evidence="2">
    <location>
        <begin position="206"/>
        <end position="217"/>
    </location>
</feature>
<feature type="active site" evidence="1">
    <location>
        <position position="134"/>
    </location>
</feature>
<feature type="binding site" evidence="1">
    <location>
        <position position="91"/>
    </location>
    <ligand>
        <name>Fe cation</name>
        <dbReference type="ChEBI" id="CHEBI:24875"/>
    </ligand>
</feature>
<feature type="binding site" evidence="1">
    <location>
        <position position="133"/>
    </location>
    <ligand>
        <name>Fe cation</name>
        <dbReference type="ChEBI" id="CHEBI:24875"/>
    </ligand>
</feature>
<feature type="binding site" evidence="1">
    <location>
        <position position="137"/>
    </location>
    <ligand>
        <name>Fe cation</name>
        <dbReference type="ChEBI" id="CHEBI:24875"/>
    </ligand>
</feature>
<keyword id="KW-0378">Hydrolase</keyword>
<keyword id="KW-0408">Iron</keyword>
<keyword id="KW-0479">Metal-binding</keyword>
<keyword id="KW-0648">Protein biosynthesis</keyword>
<keyword id="KW-1185">Reference proteome</keyword>
<protein>
    <recommendedName>
        <fullName evidence="1">Peptide deformylase</fullName>
        <shortName evidence="1">PDF</shortName>
        <ecNumber evidence="1">3.5.1.88</ecNumber>
    </recommendedName>
    <alternativeName>
        <fullName evidence="1">Polypeptide deformylase</fullName>
    </alternativeName>
</protein>
<gene>
    <name evidence="1" type="primary">def</name>
    <name type="ordered locus">STH1343</name>
</gene>
<accession>Q67PR5</accession>
<comment type="function">
    <text evidence="1">Removes the formyl group from the N-terminal Met of newly synthesized proteins. Requires at least a dipeptide for an efficient rate of reaction. N-terminal L-methionine is a prerequisite for activity but the enzyme has broad specificity at other positions.</text>
</comment>
<comment type="catalytic activity">
    <reaction evidence="1">
        <text>N-terminal N-formyl-L-methionyl-[peptide] + H2O = N-terminal L-methionyl-[peptide] + formate</text>
        <dbReference type="Rhea" id="RHEA:24420"/>
        <dbReference type="Rhea" id="RHEA-COMP:10639"/>
        <dbReference type="Rhea" id="RHEA-COMP:10640"/>
        <dbReference type="ChEBI" id="CHEBI:15377"/>
        <dbReference type="ChEBI" id="CHEBI:15740"/>
        <dbReference type="ChEBI" id="CHEBI:49298"/>
        <dbReference type="ChEBI" id="CHEBI:64731"/>
        <dbReference type="EC" id="3.5.1.88"/>
    </reaction>
</comment>
<comment type="cofactor">
    <cofactor evidence="1">
        <name>Fe(2+)</name>
        <dbReference type="ChEBI" id="CHEBI:29033"/>
    </cofactor>
    <text evidence="1">Binds 1 Fe(2+) ion.</text>
</comment>
<comment type="similarity">
    <text evidence="1">Belongs to the polypeptide deformylase family.</text>
</comment>
<dbReference type="EC" id="3.5.1.88" evidence="1"/>
<dbReference type="EMBL" id="AP006840">
    <property type="protein sequence ID" value="BAD40328.1"/>
    <property type="molecule type" value="Genomic_DNA"/>
</dbReference>
<dbReference type="RefSeq" id="WP_011195474.1">
    <property type="nucleotide sequence ID" value="NC_006177.1"/>
</dbReference>
<dbReference type="SMR" id="Q67PR5"/>
<dbReference type="STRING" id="292459.STH1343"/>
<dbReference type="KEGG" id="sth:STH1343"/>
<dbReference type="eggNOG" id="COG0242">
    <property type="taxonomic scope" value="Bacteria"/>
</dbReference>
<dbReference type="HOGENOM" id="CLU_061901_4_2_9"/>
<dbReference type="OrthoDB" id="9784988at2"/>
<dbReference type="Proteomes" id="UP000000417">
    <property type="component" value="Chromosome"/>
</dbReference>
<dbReference type="GO" id="GO:0046872">
    <property type="term" value="F:metal ion binding"/>
    <property type="evidence" value="ECO:0007669"/>
    <property type="project" value="UniProtKB-KW"/>
</dbReference>
<dbReference type="GO" id="GO:0042586">
    <property type="term" value="F:peptide deformylase activity"/>
    <property type="evidence" value="ECO:0007669"/>
    <property type="project" value="UniProtKB-UniRule"/>
</dbReference>
<dbReference type="GO" id="GO:0043686">
    <property type="term" value="P:co-translational protein modification"/>
    <property type="evidence" value="ECO:0007669"/>
    <property type="project" value="TreeGrafter"/>
</dbReference>
<dbReference type="GO" id="GO:0006412">
    <property type="term" value="P:translation"/>
    <property type="evidence" value="ECO:0007669"/>
    <property type="project" value="UniProtKB-UniRule"/>
</dbReference>
<dbReference type="CDD" id="cd00487">
    <property type="entry name" value="Pep_deformylase"/>
    <property type="match status" value="1"/>
</dbReference>
<dbReference type="FunFam" id="3.90.45.10:FF:000005">
    <property type="entry name" value="Peptide deformylase"/>
    <property type="match status" value="1"/>
</dbReference>
<dbReference type="Gene3D" id="3.90.45.10">
    <property type="entry name" value="Peptide deformylase"/>
    <property type="match status" value="1"/>
</dbReference>
<dbReference type="HAMAP" id="MF_00163">
    <property type="entry name" value="Pep_deformylase"/>
    <property type="match status" value="1"/>
</dbReference>
<dbReference type="InterPro" id="IPR023635">
    <property type="entry name" value="Peptide_deformylase"/>
</dbReference>
<dbReference type="InterPro" id="IPR036821">
    <property type="entry name" value="Peptide_deformylase_sf"/>
</dbReference>
<dbReference type="NCBIfam" id="TIGR00079">
    <property type="entry name" value="pept_deformyl"/>
    <property type="match status" value="1"/>
</dbReference>
<dbReference type="NCBIfam" id="NF001159">
    <property type="entry name" value="PRK00150.1-3"/>
    <property type="match status" value="1"/>
</dbReference>
<dbReference type="PANTHER" id="PTHR10458">
    <property type="entry name" value="PEPTIDE DEFORMYLASE"/>
    <property type="match status" value="1"/>
</dbReference>
<dbReference type="PANTHER" id="PTHR10458:SF22">
    <property type="entry name" value="PEPTIDE DEFORMYLASE"/>
    <property type="match status" value="1"/>
</dbReference>
<dbReference type="Pfam" id="PF01327">
    <property type="entry name" value="Pep_deformylase"/>
    <property type="match status" value="1"/>
</dbReference>
<dbReference type="PRINTS" id="PR01576">
    <property type="entry name" value="PDEFORMYLASE"/>
</dbReference>
<dbReference type="SUPFAM" id="SSF56420">
    <property type="entry name" value="Peptide deformylase"/>
    <property type="match status" value="1"/>
</dbReference>
<evidence type="ECO:0000255" key="1">
    <source>
        <dbReference type="HAMAP-Rule" id="MF_00163"/>
    </source>
</evidence>
<evidence type="ECO:0000256" key="2">
    <source>
        <dbReference type="SAM" id="MobiDB-lite"/>
    </source>
</evidence>